<sequence length="579" mass="66307">MLSCDICGETVSSEPDMKAHLLIVHMENEVICPFCKLSGVNYDEMCFHIETAHFEQNELERNFERINTVQYGISDNRKDSSLQCRADINSSVHSACASNQPKISAQSLPKDGTLKHKDFYSENLTESRKFLKSTEKQSDRTKIKESIYETMYSPPECPFCGKIEDNSQDMETHVKTKHADLLDTPLEDCNQLLYDCPMCGLVCTNYHILQEHVDLHLEESSFGQGVNRVQCSRDLELAQQLQQEEDRKRRSEESRQEMEEFQKLQRQYGLDNSGGYKQQQLRNMEIEVNRGRMHPSEFHRRKADMMESLAIGVDDGKTKTSGIMEALYRYYQNAATDVRRVWLSAGVDHFHSSFGDKGWGCGYRNFQMLLSSLLQNDAYDDSLKGMSVPCIPKIQSMIEDAWKEGFDPQGASQLNDKLQGTKAWIGACEIYTLLTSLRIKCRIVDFHKSTGPLGTHPRLFEWILSYYASEREGSPKVVCTSKPPIYLQHQGHSRTVVGIEEKKNRTLCLLVFDPGCPSREMQKLLKHDMEVSSLKQLRKFVGNLKHKQYQIVAVEGVLSSEEKIARRQASQVFTAEKIP</sequence>
<organism>
    <name type="scientific">Bos taurus</name>
    <name type="common">Bovine</name>
    <dbReference type="NCBI Taxonomy" id="9913"/>
    <lineage>
        <taxon>Eukaryota</taxon>
        <taxon>Metazoa</taxon>
        <taxon>Chordata</taxon>
        <taxon>Craniata</taxon>
        <taxon>Vertebrata</taxon>
        <taxon>Euteleostomi</taxon>
        <taxon>Mammalia</taxon>
        <taxon>Eutheria</taxon>
        <taxon>Laurasiatheria</taxon>
        <taxon>Artiodactyla</taxon>
        <taxon>Ruminantia</taxon>
        <taxon>Pecora</taxon>
        <taxon>Bovidae</taxon>
        <taxon>Bovinae</taxon>
        <taxon>Bos</taxon>
    </lineage>
</organism>
<reference key="1">
    <citation type="submission" date="2005-09" db="EMBL/GenBank/DDBJ databases">
        <authorList>
            <consortium name="NIH - Mammalian Gene Collection (MGC) project"/>
        </authorList>
    </citation>
    <scope>NUCLEOTIDE SEQUENCE [LARGE SCALE MRNA]</scope>
    <source>
        <strain>Hereford</strain>
        <tissue>Ascending colon</tissue>
    </source>
</reference>
<dbReference type="EC" id="3.4.19.12" evidence="1"/>
<dbReference type="EMBL" id="BC104595">
    <property type="protein sequence ID" value="AAI04596.1"/>
    <property type="molecule type" value="mRNA"/>
</dbReference>
<dbReference type="RefSeq" id="NP_001029766.1">
    <property type="nucleotide sequence ID" value="NM_001034594.1"/>
</dbReference>
<dbReference type="SMR" id="Q3SWY8"/>
<dbReference type="FunCoup" id="Q3SWY8">
    <property type="interactions" value="2387"/>
</dbReference>
<dbReference type="STRING" id="9913.ENSBTAP00000005061"/>
<dbReference type="PaxDb" id="9913-ENSBTAP00000005061"/>
<dbReference type="GeneID" id="533724"/>
<dbReference type="KEGG" id="bta:533724"/>
<dbReference type="CTD" id="221302"/>
<dbReference type="eggNOG" id="KOG4696">
    <property type="taxonomic scope" value="Eukaryota"/>
</dbReference>
<dbReference type="InParanoid" id="Q3SWY8"/>
<dbReference type="OrthoDB" id="288987at2759"/>
<dbReference type="Proteomes" id="UP000009136">
    <property type="component" value="Unplaced"/>
</dbReference>
<dbReference type="GO" id="GO:0005737">
    <property type="term" value="C:cytoplasm"/>
    <property type="evidence" value="ECO:0007669"/>
    <property type="project" value="UniProtKB-SubCell"/>
</dbReference>
<dbReference type="GO" id="GO:0005634">
    <property type="term" value="C:nucleus"/>
    <property type="evidence" value="ECO:0007669"/>
    <property type="project" value="UniProtKB-SubCell"/>
</dbReference>
<dbReference type="GO" id="GO:0004843">
    <property type="term" value="F:cysteine-type deubiquitinase activity"/>
    <property type="evidence" value="ECO:0007669"/>
    <property type="project" value="UniProtKB-EC"/>
</dbReference>
<dbReference type="GO" id="GO:0008270">
    <property type="term" value="F:zinc ion binding"/>
    <property type="evidence" value="ECO:0007669"/>
    <property type="project" value="UniProtKB-KW"/>
</dbReference>
<dbReference type="FunFam" id="3.90.70.130:FF:000002">
    <property type="entry name" value="Zinc finger containing ubiquitin peptidase 1"/>
    <property type="match status" value="1"/>
</dbReference>
<dbReference type="Gene3D" id="3.90.70.130">
    <property type="match status" value="1"/>
</dbReference>
<dbReference type="Gene3D" id="3.30.160.60">
    <property type="entry name" value="Classic Zinc Finger"/>
    <property type="match status" value="2"/>
</dbReference>
<dbReference type="InterPro" id="IPR012462">
    <property type="entry name" value="UfSP1/2_DUB_cat"/>
</dbReference>
<dbReference type="InterPro" id="IPR050688">
    <property type="entry name" value="Zinc_finger/UBP_domain"/>
</dbReference>
<dbReference type="InterPro" id="IPR013087">
    <property type="entry name" value="Znf_C2H2_type"/>
</dbReference>
<dbReference type="PANTHER" id="PTHR24403">
    <property type="entry name" value="ZINC FINGER PROTEIN"/>
    <property type="match status" value="1"/>
</dbReference>
<dbReference type="PANTHER" id="PTHR24403:SF82">
    <property type="entry name" value="ZINC FINGER-CONTAINING UBIQUITIN PEPTIDASE 1"/>
    <property type="match status" value="1"/>
</dbReference>
<dbReference type="Pfam" id="PF07910">
    <property type="entry name" value="Peptidase_C78"/>
    <property type="match status" value="1"/>
</dbReference>
<dbReference type="SMART" id="SM00355">
    <property type="entry name" value="ZnF_C2H2"/>
    <property type="match status" value="4"/>
</dbReference>
<dbReference type="PROSITE" id="PS00028">
    <property type="entry name" value="ZINC_FINGER_C2H2_1"/>
    <property type="match status" value="2"/>
</dbReference>
<dbReference type="PROSITE" id="PS50157">
    <property type="entry name" value="ZINC_FINGER_C2H2_2"/>
    <property type="match status" value="1"/>
</dbReference>
<protein>
    <recommendedName>
        <fullName evidence="4">Zinc finger-containing ubiquitin peptidase 1</fullName>
        <ecNumber evidence="1">3.4.19.12</ecNumber>
    </recommendedName>
    <alternativeName>
        <fullName>Lys-63-specific deubiquitinase ZUFSP</fullName>
        <shortName>DUB</shortName>
    </alternativeName>
    <alternativeName>
        <fullName>Zinc finger with UFM1-specific peptidase domain protein</fullName>
    </alternativeName>
</protein>
<proteinExistence type="evidence at transcript level"/>
<evidence type="ECO:0000250" key="1">
    <source>
        <dbReference type="UniProtKB" id="Q96AP4"/>
    </source>
</evidence>
<evidence type="ECO:0000250" key="2">
    <source>
        <dbReference type="UniProtKB" id="Q99K23"/>
    </source>
</evidence>
<evidence type="ECO:0000255" key="3">
    <source>
        <dbReference type="PROSITE-ProRule" id="PRU00042"/>
    </source>
</evidence>
<evidence type="ECO:0000305" key="4"/>
<name>ZUP1_BOVIN</name>
<accession>Q3SWY8</accession>
<keyword id="KW-0007">Acetylation</keyword>
<keyword id="KW-0963">Cytoplasm</keyword>
<keyword id="KW-0378">Hydrolase</keyword>
<keyword id="KW-0479">Metal-binding</keyword>
<keyword id="KW-0539">Nucleus</keyword>
<keyword id="KW-1185">Reference proteome</keyword>
<keyword id="KW-0677">Repeat</keyword>
<keyword id="KW-0862">Zinc</keyword>
<keyword id="KW-0863">Zinc-finger</keyword>
<comment type="function">
    <text evidence="1">Deubiquitinase with endodeubiquitinase activity that specifically interacts with and cleaves 'Lys-63'-linked long polyubiquitin chains. Shows only weak activity against 'Lys-11' and 'Lys-48'-linked chains. Plays an important role in genome stability pathways, functioning to prevent spontaneous DNA damage and also promote cellular survival in response to exogenous DNA damage. Modulates the ubiquitination status of replication protein A (RPA) complex proteins in response to replication stress.</text>
</comment>
<comment type="catalytic activity">
    <reaction evidence="1">
        <text>Thiol-dependent hydrolysis of ester, thioester, amide, peptide and isopeptide bonds formed by the C-terminal Gly of ubiquitin (a 76-residue protein attached to proteins as an intracellular targeting signal).</text>
        <dbReference type="EC" id="3.4.19.12"/>
    </reaction>
</comment>
<comment type="subunit">
    <text evidence="1">Interacts with RPA1 and RPA2.</text>
</comment>
<comment type="subcellular location">
    <subcellularLocation>
        <location evidence="1">Cytoplasm</location>
    </subcellularLocation>
    <subcellularLocation>
        <location evidence="1">Nucleus</location>
    </subcellularLocation>
    <text evidence="1">Mostly present in the nuclear fraction. Localizes to DNA lesions.</text>
</comment>
<comment type="domain">
    <text evidence="1">The motif interacting with ubiquitin (MIU) and ZUFSP ubiquitin-binding domain (zUBD, also called ZUFSP helical arm ZHA) are responsible for binding the distal (outgoing) ubiquitin units S1 and S2 respectively.</text>
</comment>
<comment type="domain">
    <text evidence="1">C2H2-type zinc finger 4 is a ubiquitin-binding zinc finger (UBZ) and required for polyubiquitin binding, possibly binding the proximal ubiqutin, and for catalytic activity. C2H2-type zinc fingers 1-3 are required for localization to sites of DNA damage.</text>
</comment>
<comment type="similarity">
    <text evidence="4">Belongs to the peptidase C78 family. ZUFSP subfamily.</text>
</comment>
<gene>
    <name evidence="1" type="primary">ZUP1</name>
    <name type="synonym">ZUFSP</name>
</gene>
<feature type="chain" id="PRO_0000244335" description="Zinc finger-containing ubiquitin peptidase 1">
    <location>
        <begin position="1"/>
        <end position="579"/>
    </location>
</feature>
<feature type="zinc finger region" description="C2H2-type 1" evidence="3">
    <location>
        <begin position="2"/>
        <end position="25"/>
    </location>
</feature>
<feature type="zinc finger region" description="C2H2-type 2; atypical" evidence="1">
    <location>
        <begin position="30"/>
        <end position="53"/>
    </location>
</feature>
<feature type="zinc finger region" description="C2H2-type 3" evidence="3">
    <location>
        <begin position="155"/>
        <end position="178"/>
    </location>
</feature>
<feature type="zinc finger region" description="C2H2-type 4" evidence="3">
    <location>
        <begin position="194"/>
        <end position="216"/>
    </location>
</feature>
<feature type="region of interest" description="MIU" evidence="1">
    <location>
        <begin position="227"/>
        <end position="249"/>
    </location>
</feature>
<feature type="region of interest" description="zUBD/ZHA" evidence="1">
    <location>
        <begin position="250"/>
        <end position="275"/>
    </location>
</feature>
<feature type="active site" description="Nucleophile" evidence="1">
    <location>
        <position position="361"/>
    </location>
</feature>
<feature type="active site" description="Proton acceptor" evidence="1">
    <location>
        <position position="492"/>
    </location>
</feature>
<feature type="active site" evidence="2">
    <location>
        <position position="513"/>
    </location>
</feature>
<feature type="site" description="Involved in the stabilization of negative charge on the oxyanion by the formation of the oxyanion hole" evidence="1">
    <location>
        <position position="488"/>
    </location>
</feature>
<feature type="modified residue" description="N6-acetyllysine" evidence="1">
    <location>
        <position position="263"/>
    </location>
</feature>